<dbReference type="EMBL" id="AE014075">
    <property type="protein sequence ID" value="AAN80791.1"/>
    <property type="molecule type" value="Genomic_DNA"/>
</dbReference>
<dbReference type="RefSeq" id="WP_001158220.1">
    <property type="nucleotide sequence ID" value="NZ_CP051263.1"/>
</dbReference>
<dbReference type="SMR" id="P0AFT3"/>
<dbReference type="STRING" id="199310.c2332"/>
<dbReference type="GeneID" id="93776224"/>
<dbReference type="KEGG" id="ecc:c2332"/>
<dbReference type="eggNOG" id="COG0765">
    <property type="taxonomic scope" value="Bacteria"/>
</dbReference>
<dbReference type="HOGENOM" id="CLU_019602_1_4_6"/>
<dbReference type="BioCyc" id="ECOL199310:C2332-MONOMER"/>
<dbReference type="Proteomes" id="UP000001410">
    <property type="component" value="Chromosome"/>
</dbReference>
<dbReference type="GO" id="GO:0043190">
    <property type="term" value="C:ATP-binding cassette (ABC) transporter complex"/>
    <property type="evidence" value="ECO:0007669"/>
    <property type="project" value="InterPro"/>
</dbReference>
<dbReference type="GO" id="GO:0015184">
    <property type="term" value="F:L-cystine transmembrane transporter activity"/>
    <property type="evidence" value="ECO:0007669"/>
    <property type="project" value="TreeGrafter"/>
</dbReference>
<dbReference type="CDD" id="cd06261">
    <property type="entry name" value="TM_PBP2"/>
    <property type="match status" value="1"/>
</dbReference>
<dbReference type="FunFam" id="1.10.3720.10:FF:000009">
    <property type="entry name" value="Amino acid ABC transporter permease"/>
    <property type="match status" value="1"/>
</dbReference>
<dbReference type="Gene3D" id="1.10.3720.10">
    <property type="entry name" value="MetI-like"/>
    <property type="match status" value="1"/>
</dbReference>
<dbReference type="InterPro" id="IPR010065">
    <property type="entry name" value="AA_ABC_transptr_permease_3TM"/>
</dbReference>
<dbReference type="InterPro" id="IPR043429">
    <property type="entry name" value="ArtM/GltK/GlnP/TcyL/YhdX-like"/>
</dbReference>
<dbReference type="InterPro" id="IPR000515">
    <property type="entry name" value="MetI-like"/>
</dbReference>
<dbReference type="InterPro" id="IPR035906">
    <property type="entry name" value="MetI-like_sf"/>
</dbReference>
<dbReference type="NCBIfam" id="TIGR01726">
    <property type="entry name" value="HEQRo_perm_3TM"/>
    <property type="match status" value="1"/>
</dbReference>
<dbReference type="NCBIfam" id="NF011680">
    <property type="entry name" value="PRK15100.1"/>
    <property type="match status" value="1"/>
</dbReference>
<dbReference type="PANTHER" id="PTHR30614:SF0">
    <property type="entry name" value="L-CYSTINE TRANSPORT SYSTEM PERMEASE PROTEIN TCYL"/>
    <property type="match status" value="1"/>
</dbReference>
<dbReference type="PANTHER" id="PTHR30614">
    <property type="entry name" value="MEMBRANE COMPONENT OF AMINO ACID ABC TRANSPORTER"/>
    <property type="match status" value="1"/>
</dbReference>
<dbReference type="Pfam" id="PF00528">
    <property type="entry name" value="BPD_transp_1"/>
    <property type="match status" value="1"/>
</dbReference>
<dbReference type="SUPFAM" id="SSF161098">
    <property type="entry name" value="MetI-like"/>
    <property type="match status" value="1"/>
</dbReference>
<dbReference type="PROSITE" id="PS50928">
    <property type="entry name" value="ABC_TM1"/>
    <property type="match status" value="1"/>
</dbReference>
<feature type="chain" id="PRO_0000060251" description="L-cystine transport system permease protein TcyL">
    <location>
        <begin position="1"/>
        <end position="222"/>
    </location>
</feature>
<feature type="topological domain" description="Periplasmic" evidence="4">
    <location>
        <begin position="1"/>
        <end position="22"/>
    </location>
</feature>
<feature type="transmembrane region" description="Helical" evidence="2">
    <location>
        <begin position="23"/>
        <end position="43"/>
    </location>
</feature>
<feature type="topological domain" description="Cytoplasmic" evidence="4">
    <location>
        <begin position="44"/>
        <end position="64"/>
    </location>
</feature>
<feature type="transmembrane region" description="Helical" evidence="2">
    <location>
        <begin position="65"/>
        <end position="85"/>
    </location>
</feature>
<feature type="topological domain" description="Periplasmic" evidence="4">
    <location>
        <begin position="86"/>
        <end position="182"/>
    </location>
</feature>
<feature type="transmembrane region" description="Helical" evidence="2">
    <location>
        <begin position="183"/>
        <end position="203"/>
    </location>
</feature>
<feature type="topological domain" description="Cytoplasmic" evidence="4">
    <location>
        <begin position="204"/>
        <end position="222"/>
    </location>
</feature>
<feature type="domain" description="ABC transmembrane type-1" evidence="3">
    <location>
        <begin position="19"/>
        <end position="207"/>
    </location>
</feature>
<comment type="function">
    <text evidence="1">Part of the ABC transporter complex TcyJLN involved in L-cystine import. Responsible for the translocation of the substrate across the membrane.</text>
</comment>
<comment type="subunit">
    <text evidence="1">The complex is composed of two ATP-binding proteins (TcyN), two transmembrane proteins (TcyL) and a solute-binding protein (TcyJ).</text>
</comment>
<comment type="subcellular location">
    <subcellularLocation>
        <location evidence="1">Cell inner membrane</location>
        <topology evidence="2">Multi-pass membrane protein</topology>
    </subcellularLocation>
</comment>
<comment type="similarity">
    <text evidence="4">Belongs to the binding-protein-dependent transport system permease family. HisMQ subfamily.</text>
</comment>
<gene>
    <name evidence="1" type="primary">tcyL</name>
    <name type="synonym">yecS</name>
    <name type="ordered locus">c2332</name>
</gene>
<protein>
    <recommendedName>
        <fullName evidence="1">L-cystine transport system permease protein TcyL</fullName>
    </recommendedName>
</protein>
<organism>
    <name type="scientific">Escherichia coli O6:H1 (strain CFT073 / ATCC 700928 / UPEC)</name>
    <dbReference type="NCBI Taxonomy" id="199310"/>
    <lineage>
        <taxon>Bacteria</taxon>
        <taxon>Pseudomonadati</taxon>
        <taxon>Pseudomonadota</taxon>
        <taxon>Gammaproteobacteria</taxon>
        <taxon>Enterobacterales</taxon>
        <taxon>Enterobacteriaceae</taxon>
        <taxon>Escherichia</taxon>
    </lineage>
</organism>
<evidence type="ECO:0000250" key="1">
    <source>
        <dbReference type="UniProtKB" id="P0AFT2"/>
    </source>
</evidence>
<evidence type="ECO:0000255" key="2"/>
<evidence type="ECO:0000255" key="3">
    <source>
        <dbReference type="PROSITE-ProRule" id="PRU00441"/>
    </source>
</evidence>
<evidence type="ECO:0000305" key="4"/>
<keyword id="KW-0029">Amino-acid transport</keyword>
<keyword id="KW-0997">Cell inner membrane</keyword>
<keyword id="KW-1003">Cell membrane</keyword>
<keyword id="KW-0472">Membrane</keyword>
<keyword id="KW-1185">Reference proteome</keyword>
<keyword id="KW-0812">Transmembrane</keyword>
<keyword id="KW-1133">Transmembrane helix</keyword>
<keyword id="KW-0813">Transport</keyword>
<reference key="1">
    <citation type="journal article" date="2002" name="Proc. Natl. Acad. Sci. U.S.A.">
        <title>Extensive mosaic structure revealed by the complete genome sequence of uropathogenic Escherichia coli.</title>
        <authorList>
            <person name="Welch R.A."/>
            <person name="Burland V."/>
            <person name="Plunkett G. III"/>
            <person name="Redford P."/>
            <person name="Roesch P."/>
            <person name="Rasko D."/>
            <person name="Buckles E.L."/>
            <person name="Liou S.-R."/>
            <person name="Boutin A."/>
            <person name="Hackett J."/>
            <person name="Stroud D."/>
            <person name="Mayhew G.F."/>
            <person name="Rose D.J."/>
            <person name="Zhou S."/>
            <person name="Schwartz D.C."/>
            <person name="Perna N.T."/>
            <person name="Mobley H.L.T."/>
            <person name="Donnenberg M.S."/>
            <person name="Blattner F.R."/>
        </authorList>
    </citation>
    <scope>NUCLEOTIDE SEQUENCE [LARGE SCALE GENOMIC DNA]</scope>
    <source>
        <strain>CFT073 / ATCC 700928 / UPEC</strain>
    </source>
</reference>
<proteinExistence type="inferred from homology"/>
<sequence length="222" mass="24801">MQESIQLVIDSLPFLLKGAGYTLQLSIGGMFFGLLLGFILALMRLSPIWPVRWLARFYISIFRGTPLIAQLFMIYYGLPQFGIELDPIPSAMIGLSLNTAAYAAETLRAAISSIDKGQWEAAASIGMTPWQTMRRAILPQAARVALPPLSNSFISLVKDTSLAATIQVPELFRQAQLITSRTLEVFTMYLAASLIYWIMATVLSTLQNHFENQLNRQEREPK</sequence>
<name>TCYL_ECOL6</name>
<accession>P0AFT3</accession>
<accession>O07985</accession>
<accession>P76315</accession>